<keyword id="KW-0119">Carbohydrate metabolism</keyword>
<keyword id="KW-0456">Lyase</keyword>
<keyword id="KW-0511">Multifunctional enzyme</keyword>
<keyword id="KW-1185">Reference proteome</keyword>
<organism>
    <name type="scientific">Methanosarcina acetivorans (strain ATCC 35395 / DSM 2834 / JCM 12185 / C2A)</name>
    <dbReference type="NCBI Taxonomy" id="188937"/>
    <lineage>
        <taxon>Archaea</taxon>
        <taxon>Methanobacteriati</taxon>
        <taxon>Methanobacteriota</taxon>
        <taxon>Stenosarchaea group</taxon>
        <taxon>Methanomicrobia</taxon>
        <taxon>Methanosarcinales</taxon>
        <taxon>Methanosarcinaceae</taxon>
        <taxon>Methanosarcina</taxon>
    </lineage>
</organism>
<feature type="chain" id="PRO_0000236085" description="Bifunctional enzyme Fae/Hps">
    <location>
        <begin position="1"/>
        <end position="392"/>
    </location>
</feature>
<feature type="region of interest" description="Formaldehyde-activating enzyme" evidence="1">
    <location>
        <begin position="1"/>
        <end position="161"/>
    </location>
</feature>
<feature type="region of interest" description="3-hexulose-6-phosphate synthase" evidence="1">
    <location>
        <begin position="162"/>
        <end position="392"/>
    </location>
</feature>
<feature type="active site" description="Proton donor" evidence="1">
    <location>
        <position position="17"/>
    </location>
</feature>
<feature type="binding site" evidence="1">
    <location>
        <position position="19"/>
    </location>
    <ligand>
        <name>substrate</name>
    </ligand>
</feature>
<feature type="binding site" evidence="1">
    <location>
        <position position="48"/>
    </location>
    <ligand>
        <name>substrate</name>
    </ligand>
</feature>
<feature type="binding site" evidence="1">
    <location>
        <position position="66"/>
    </location>
    <ligand>
        <name>substrate</name>
    </ligand>
</feature>
<feature type="binding site" evidence="1">
    <location>
        <position position="68"/>
    </location>
    <ligand>
        <name>substrate</name>
    </ligand>
</feature>
<feature type="binding site" evidence="1">
    <location>
        <position position="83"/>
    </location>
    <ligand>
        <name>substrate</name>
    </ligand>
</feature>
<comment type="function">
    <text evidence="1">Catalyzes the condensation of formaldehyde with tetrahydromethanopterin (H(4)MPT) to 5,10-methylenetetrahydromethanopterin.</text>
</comment>
<comment type="function">
    <text evidence="1">Catalyzes the reversible formation of ribulose-5-phosphate and formaldehyde from 3-hexulose-6-phosphate.</text>
</comment>
<comment type="catalytic activity">
    <reaction evidence="1">
        <text>5,6,7,8-tetrahydromethanopterin + formaldehyde = 5,10-methylenetetrahydromethanopterin + H2O</text>
        <dbReference type="Rhea" id="RHEA:24678"/>
        <dbReference type="ChEBI" id="CHEBI:15377"/>
        <dbReference type="ChEBI" id="CHEBI:16842"/>
        <dbReference type="ChEBI" id="CHEBI:57818"/>
        <dbReference type="ChEBI" id="CHEBI:58103"/>
        <dbReference type="EC" id="4.2.1.147"/>
    </reaction>
</comment>
<comment type="catalytic activity">
    <reaction evidence="1">
        <text>D-ribulose 5-phosphate + formaldehyde = D-arabino-hex-3-ulose 6-phosphate</text>
        <dbReference type="Rhea" id="RHEA:25201"/>
        <dbReference type="ChEBI" id="CHEBI:16842"/>
        <dbReference type="ChEBI" id="CHEBI:58121"/>
        <dbReference type="ChEBI" id="CHEBI:58542"/>
        <dbReference type="EC" id="4.1.2.43"/>
    </reaction>
</comment>
<comment type="pathway">
    <text evidence="1">Carbohydrate biosynthesis; D-ribose 5-phosphate biosynthesis.</text>
</comment>
<comment type="similarity">
    <text evidence="1">In the N-terminal section; belongs to the formaldehyde-activating enzyme family.</text>
</comment>
<comment type="similarity">
    <text evidence="1">In the C-terminal section; belongs to the HPS/KGPDC family. HPS subfamily.</text>
</comment>
<accession>Q8THA9</accession>
<evidence type="ECO:0000255" key="1">
    <source>
        <dbReference type="HAMAP-Rule" id="MF_01268"/>
    </source>
</evidence>
<sequence length="392" mass="42344">MFQIGEALMGQGSELAHVDLMIGDKGGPVGQAFANGLTQLSAGHTPLLSVIRPNLPPKPSTLIIPKVTVKNMDQAAKIFGPAQSAVAKAVADSVEEGVIPKDQVEDLVVVASVFIHPEAQDYNKIYRYNYGATKLAIKRALEGFPDINKVLEESNKSTHAIMGFKVTRLWDPPYLQVAFDNPNLEFVLSAISQIPNSDHVIIEAGTPLIKRYGVDVISKIRQVRPDAFIVADLKTLDTGNLEARMVADAAGDAIVVSALAPISTIDKLIEEAHKTGIYAVMDTLNQHDPISVLKQLKVMPDVIELHRGIDIEGTEHAWGNIGEIKKIAPKALIAVAGGVRLDKVPVALGQGADILVVGRAITNAKDVREVAEQFINALNKPEIDQFRVMTDF</sequence>
<name>FAEHP_METAC</name>
<proteinExistence type="inferred from homology"/>
<reference key="1">
    <citation type="journal article" date="2002" name="Genome Res.">
        <title>The genome of Methanosarcina acetivorans reveals extensive metabolic and physiological diversity.</title>
        <authorList>
            <person name="Galagan J.E."/>
            <person name="Nusbaum C."/>
            <person name="Roy A."/>
            <person name="Endrizzi M.G."/>
            <person name="Macdonald P."/>
            <person name="FitzHugh W."/>
            <person name="Calvo S."/>
            <person name="Engels R."/>
            <person name="Smirnov S."/>
            <person name="Atnoor D."/>
            <person name="Brown A."/>
            <person name="Allen N."/>
            <person name="Naylor J."/>
            <person name="Stange-Thomann N."/>
            <person name="DeArellano K."/>
            <person name="Johnson R."/>
            <person name="Linton L."/>
            <person name="McEwan P."/>
            <person name="McKernan K."/>
            <person name="Talamas J."/>
            <person name="Tirrell A."/>
            <person name="Ye W."/>
            <person name="Zimmer A."/>
            <person name="Barber R.D."/>
            <person name="Cann I."/>
            <person name="Graham D.E."/>
            <person name="Grahame D.A."/>
            <person name="Guss A.M."/>
            <person name="Hedderich R."/>
            <person name="Ingram-Smith C."/>
            <person name="Kuettner H.C."/>
            <person name="Krzycki J.A."/>
            <person name="Leigh J.A."/>
            <person name="Li W."/>
            <person name="Liu J."/>
            <person name="Mukhopadhyay B."/>
            <person name="Reeve J.N."/>
            <person name="Smith K."/>
            <person name="Springer T.A."/>
            <person name="Umayam L.A."/>
            <person name="White O."/>
            <person name="White R.H."/>
            <person name="de Macario E.C."/>
            <person name="Ferry J.G."/>
            <person name="Jarrell K.F."/>
            <person name="Jing H."/>
            <person name="Macario A.J.L."/>
            <person name="Paulsen I.T."/>
            <person name="Pritchett M."/>
            <person name="Sowers K.R."/>
            <person name="Swanson R.V."/>
            <person name="Zinder S.H."/>
            <person name="Lander E."/>
            <person name="Metcalf W.W."/>
            <person name="Birren B."/>
        </authorList>
    </citation>
    <scope>NUCLEOTIDE SEQUENCE [LARGE SCALE GENOMIC DNA]</scope>
    <source>
        <strain>ATCC 35395 / DSM 2834 / JCM 12185 / C2A</strain>
    </source>
</reference>
<protein>
    <recommendedName>
        <fullName evidence="1">Bifunctional enzyme Fae/Hps</fullName>
    </recommendedName>
    <domain>
        <recommendedName>
            <fullName evidence="1">5,6,7,8-tetrahydromethanopterin hydro-lyase</fullName>
            <ecNumber evidence="1">4.2.1.147</ecNumber>
        </recommendedName>
        <alternativeName>
            <fullName evidence="1">Formaldehyde-activating enzyme</fullName>
            <shortName evidence="1">Fae</shortName>
        </alternativeName>
    </domain>
    <domain>
        <recommendedName>
            <fullName evidence="1">3-hexulose-6-phosphate synthase</fullName>
            <shortName evidence="1">HPS</shortName>
            <ecNumber evidence="1">4.1.2.43</ecNumber>
        </recommendedName>
        <alternativeName>
            <fullName evidence="1">D-arabino-3-hexulose-6-phosphate formaldehyde lyase</fullName>
        </alternativeName>
    </domain>
</protein>
<dbReference type="EC" id="4.2.1.147" evidence="1"/>
<dbReference type="EC" id="4.1.2.43" evidence="1"/>
<dbReference type="EMBL" id="AE010299">
    <property type="protein sequence ID" value="AAM07947.1"/>
    <property type="molecule type" value="Genomic_DNA"/>
</dbReference>
<dbReference type="RefSeq" id="WP_011024481.1">
    <property type="nucleotide sequence ID" value="NC_003552.1"/>
</dbReference>
<dbReference type="SMR" id="Q8THA9"/>
<dbReference type="FunCoup" id="Q8THA9">
    <property type="interactions" value="130"/>
</dbReference>
<dbReference type="STRING" id="188937.MA_4608"/>
<dbReference type="EnsemblBacteria" id="AAM07947">
    <property type="protein sequence ID" value="AAM07947"/>
    <property type="gene ID" value="MA_4608"/>
</dbReference>
<dbReference type="GeneID" id="1476502"/>
<dbReference type="KEGG" id="mac:MA_4608"/>
<dbReference type="HOGENOM" id="CLU_701335_0_0_2"/>
<dbReference type="InParanoid" id="Q8THA9"/>
<dbReference type="OrthoDB" id="64276at2157"/>
<dbReference type="PhylomeDB" id="Q8THA9"/>
<dbReference type="UniPathway" id="UPA00293"/>
<dbReference type="Proteomes" id="UP000002487">
    <property type="component" value="Chromosome"/>
</dbReference>
<dbReference type="GO" id="GO:0033982">
    <property type="term" value="F:3-dehydro-L-gulonate-6-phosphate decarboxylase activity"/>
    <property type="evidence" value="ECO:0000318"/>
    <property type="project" value="GO_Central"/>
</dbReference>
<dbReference type="GO" id="GO:0016840">
    <property type="term" value="F:carbon-nitrogen lyase activity"/>
    <property type="evidence" value="ECO:0007669"/>
    <property type="project" value="InterPro"/>
</dbReference>
<dbReference type="GO" id="GO:0043801">
    <property type="term" value="F:hexulose-6-phosphate synthase activity"/>
    <property type="evidence" value="ECO:0007669"/>
    <property type="project" value="UniProtKB-UniRule"/>
</dbReference>
<dbReference type="GO" id="GO:0016836">
    <property type="term" value="F:hydro-lyase activity"/>
    <property type="evidence" value="ECO:0007669"/>
    <property type="project" value="UniProtKB-UniRule"/>
</dbReference>
<dbReference type="GO" id="GO:0004590">
    <property type="term" value="F:orotidine-5'-phosphate decarboxylase activity"/>
    <property type="evidence" value="ECO:0007669"/>
    <property type="project" value="InterPro"/>
</dbReference>
<dbReference type="GO" id="GO:0006207">
    <property type="term" value="P:'de novo' pyrimidine nucleobase biosynthetic process"/>
    <property type="evidence" value="ECO:0007669"/>
    <property type="project" value="InterPro"/>
</dbReference>
<dbReference type="GO" id="GO:0016051">
    <property type="term" value="P:carbohydrate biosynthetic process"/>
    <property type="evidence" value="ECO:0007669"/>
    <property type="project" value="UniProtKB-UniRule"/>
</dbReference>
<dbReference type="GO" id="GO:0019854">
    <property type="term" value="P:L-ascorbic acid catabolic process"/>
    <property type="evidence" value="ECO:0000318"/>
    <property type="project" value="GO_Central"/>
</dbReference>
<dbReference type="CDD" id="cd04726">
    <property type="entry name" value="KGPDC_HPS"/>
    <property type="match status" value="1"/>
</dbReference>
<dbReference type="FunFam" id="3.20.20.70:FF:000022">
    <property type="entry name" value="3-keto-L-gulonate-6-phosphate decarboxylase UlaD"/>
    <property type="match status" value="1"/>
</dbReference>
<dbReference type="FunFam" id="3.30.230.60:FF:000001">
    <property type="entry name" value="5,6,7,8-tetrahydromethanopterin hydro-lyase"/>
    <property type="match status" value="1"/>
</dbReference>
<dbReference type="Gene3D" id="3.20.20.70">
    <property type="entry name" value="Aldolase class I"/>
    <property type="match status" value="1"/>
</dbReference>
<dbReference type="Gene3D" id="3.30.230.60">
    <property type="entry name" value="Formaldehyde-activating enzyme"/>
    <property type="match status" value="1"/>
</dbReference>
<dbReference type="HAMAP" id="MF_01268">
    <property type="entry name" value="Fae_Hps"/>
    <property type="match status" value="1"/>
</dbReference>
<dbReference type="InterPro" id="IPR013785">
    <property type="entry name" value="Aldolase_TIM"/>
</dbReference>
<dbReference type="InterPro" id="IPR020868">
    <property type="entry name" value="Fae/Hps"/>
</dbReference>
<dbReference type="InterPro" id="IPR014826">
    <property type="entry name" value="HCHO-activating_enzyme"/>
</dbReference>
<dbReference type="InterPro" id="IPR037075">
    <property type="entry name" value="HCHO-activating_enzyme_sf"/>
</dbReference>
<dbReference type="InterPro" id="IPR041710">
    <property type="entry name" value="HPS/KGPDC"/>
</dbReference>
<dbReference type="InterPro" id="IPR001754">
    <property type="entry name" value="OMPdeCOase_dom"/>
</dbReference>
<dbReference type="InterPro" id="IPR020568">
    <property type="entry name" value="Ribosomal_Su5_D2-typ_SF"/>
</dbReference>
<dbReference type="InterPro" id="IPR011060">
    <property type="entry name" value="RibuloseP-bd_barrel"/>
</dbReference>
<dbReference type="NCBIfam" id="TIGR03126">
    <property type="entry name" value="one_C_fae"/>
    <property type="match status" value="1"/>
</dbReference>
<dbReference type="NCBIfam" id="NF009833">
    <property type="entry name" value="PRK13307.1"/>
    <property type="match status" value="1"/>
</dbReference>
<dbReference type="PANTHER" id="PTHR35039">
    <property type="entry name" value="3-KETO-L-GULONATE-6-PHOSPHATE DECARBOXYLASE SGBH-RELATED"/>
    <property type="match status" value="1"/>
</dbReference>
<dbReference type="PANTHER" id="PTHR35039:SF3">
    <property type="entry name" value="3-KETO-L-GULONATE-6-PHOSPHATE DECARBOXYLASE SGBH-RELATED"/>
    <property type="match status" value="1"/>
</dbReference>
<dbReference type="Pfam" id="PF08714">
    <property type="entry name" value="Fae"/>
    <property type="match status" value="1"/>
</dbReference>
<dbReference type="Pfam" id="PF00215">
    <property type="entry name" value="OMPdecase"/>
    <property type="match status" value="1"/>
</dbReference>
<dbReference type="SMART" id="SM00934">
    <property type="entry name" value="OMPdecase"/>
    <property type="match status" value="1"/>
</dbReference>
<dbReference type="SUPFAM" id="SSF54211">
    <property type="entry name" value="Ribosomal protein S5 domain 2-like"/>
    <property type="match status" value="1"/>
</dbReference>
<dbReference type="SUPFAM" id="SSF51366">
    <property type="entry name" value="Ribulose-phoshate binding barrel"/>
    <property type="match status" value="1"/>
</dbReference>
<gene>
    <name evidence="1" type="primary">fae-hps</name>
    <name type="ordered locus">MA_4608</name>
</gene>